<keyword id="KW-0002">3D-structure</keyword>
<keyword id="KW-0963">Cytoplasm</keyword>
<keyword id="KW-0227">DNA damage</keyword>
<keyword id="KW-0234">DNA repair</keyword>
<keyword id="KW-0539">Nucleus</keyword>
<keyword id="KW-0597">Phosphoprotein</keyword>
<keyword id="KW-0647">Proteasome</keyword>
<keyword id="KW-1185">Reference proteome</keyword>
<keyword id="KW-0677">Repeat</keyword>
<keyword id="KW-0833">Ubl conjugation pathway</keyword>
<gene>
    <name type="primary">Rad23b</name>
    <name type="synonym">Mhr23b</name>
</gene>
<feature type="chain" id="PRO_0000114907" description="UV excision repair protein RAD23 homolog B">
    <location>
        <begin position="1"/>
        <end position="416"/>
    </location>
</feature>
<feature type="domain" description="Ubiquitin-like" evidence="5">
    <location>
        <begin position="1"/>
        <end position="79"/>
    </location>
</feature>
<feature type="domain" description="UBA 1" evidence="4">
    <location>
        <begin position="188"/>
        <end position="228"/>
    </location>
</feature>
<feature type="domain" description="STI1">
    <location>
        <begin position="274"/>
        <end position="317"/>
    </location>
</feature>
<feature type="domain" description="UBA 2" evidence="4">
    <location>
        <begin position="371"/>
        <end position="411"/>
    </location>
</feature>
<feature type="region of interest" description="Disordered" evidence="6">
    <location>
        <begin position="83"/>
        <end position="175"/>
    </location>
</feature>
<feature type="region of interest" description="Disordered" evidence="6">
    <location>
        <begin position="333"/>
        <end position="356"/>
    </location>
</feature>
<feature type="compositionally biased region" description="Low complexity" evidence="6">
    <location>
        <begin position="83"/>
        <end position="111"/>
    </location>
</feature>
<feature type="compositionally biased region" description="Pro residues" evidence="6">
    <location>
        <begin position="112"/>
        <end position="121"/>
    </location>
</feature>
<feature type="compositionally biased region" description="Low complexity" evidence="6">
    <location>
        <begin position="122"/>
        <end position="143"/>
    </location>
</feature>
<feature type="compositionally biased region" description="Gly residues" evidence="6">
    <location>
        <begin position="337"/>
        <end position="356"/>
    </location>
</feature>
<feature type="modified residue" description="Phosphothreonine" evidence="2">
    <location>
        <position position="155"/>
    </location>
</feature>
<feature type="modified residue" description="Phosphoserine" evidence="2">
    <location>
        <position position="160"/>
    </location>
</feature>
<feature type="modified residue" description="Phosphoserine" evidence="3">
    <location>
        <position position="174"/>
    </location>
</feature>
<feature type="modified residue" description="Phosphothreonine" evidence="3">
    <location>
        <position position="186"/>
    </location>
</feature>
<feature type="modified residue" description="Phosphoserine" evidence="3">
    <location>
        <position position="199"/>
    </location>
</feature>
<feature type="modified residue" description="Phosphotyrosine" evidence="3">
    <location>
        <position position="202"/>
    </location>
</feature>
<feature type="sequence conflict" description="In Ref. 1; CAA63146 and 4; AAH27747." evidence="15" ref="1 4">
    <original>A</original>
    <variation>T</variation>
    <location>
        <position position="98"/>
    </location>
</feature>
<feature type="sequence conflict" description="In Ref. 1; CAA63146 and 4; AAH27747." evidence="15" ref="1 4">
    <original>P</original>
    <variation>A</variation>
    <location>
        <position position="118"/>
    </location>
</feature>
<feature type="sequence conflict" description="In Ref. 1; CAA63146 and 4; AAH27747." evidence="15" ref="1 4">
    <original>A</original>
    <variation>T</variation>
    <location>
        <position position="127"/>
    </location>
</feature>
<feature type="sequence conflict" description="In Ref. 1; CAA63146 and 4; AAH27747." evidence="15" ref="1 4">
    <original>S</original>
    <variation>G</variation>
    <location>
        <position position="337"/>
    </location>
</feature>
<feature type="helix" evidence="16">
    <location>
        <begin position="275"/>
        <end position="279"/>
    </location>
</feature>
<feature type="helix" evidence="16">
    <location>
        <begin position="283"/>
        <end position="294"/>
    </location>
</feature>
<feature type="helix" evidence="16">
    <location>
        <begin position="296"/>
        <end position="298"/>
    </location>
</feature>
<feature type="helix" evidence="16">
    <location>
        <begin position="299"/>
        <end position="309"/>
    </location>
</feature>
<feature type="helix" evidence="16">
    <location>
        <begin position="311"/>
        <end position="319"/>
    </location>
</feature>
<feature type="helix" evidence="16">
    <location>
        <begin position="321"/>
        <end position="328"/>
    </location>
</feature>
<reference key="1">
    <citation type="journal article" date="1996" name="Genomics">
        <title>Cloning, comparative mapping, and RNA expression of the mouse homologues of the Saccharomyces cerevisiae nucleotide excision repair gene RAD23.</title>
        <authorList>
            <person name="van der Spek P.J."/>
            <person name="Visser C.E."/>
            <person name="Hanaoka F."/>
            <person name="Smit B."/>
            <person name="Hagemeijer A."/>
            <person name="Bootsma D."/>
            <person name="Hoeijmakers J.H.J."/>
        </authorList>
    </citation>
    <scope>NUCLEOTIDE SEQUENCE [MRNA]</scope>
    <source>
        <strain>BALB/cJ</strain>
        <tissue>Testis</tissue>
    </source>
</reference>
<reference key="2">
    <citation type="journal article" date="2005" name="Science">
        <title>The transcriptional landscape of the mammalian genome.</title>
        <authorList>
            <person name="Carninci P."/>
            <person name="Kasukawa T."/>
            <person name="Katayama S."/>
            <person name="Gough J."/>
            <person name="Frith M.C."/>
            <person name="Maeda N."/>
            <person name="Oyama R."/>
            <person name="Ravasi T."/>
            <person name="Lenhard B."/>
            <person name="Wells C."/>
            <person name="Kodzius R."/>
            <person name="Shimokawa K."/>
            <person name="Bajic V.B."/>
            <person name="Brenner S.E."/>
            <person name="Batalov S."/>
            <person name="Forrest A.R."/>
            <person name="Zavolan M."/>
            <person name="Davis M.J."/>
            <person name="Wilming L.G."/>
            <person name="Aidinis V."/>
            <person name="Allen J.E."/>
            <person name="Ambesi-Impiombato A."/>
            <person name="Apweiler R."/>
            <person name="Aturaliya R.N."/>
            <person name="Bailey T.L."/>
            <person name="Bansal M."/>
            <person name="Baxter L."/>
            <person name="Beisel K.W."/>
            <person name="Bersano T."/>
            <person name="Bono H."/>
            <person name="Chalk A.M."/>
            <person name="Chiu K.P."/>
            <person name="Choudhary V."/>
            <person name="Christoffels A."/>
            <person name="Clutterbuck D.R."/>
            <person name="Crowe M.L."/>
            <person name="Dalla E."/>
            <person name="Dalrymple B.P."/>
            <person name="de Bono B."/>
            <person name="Della Gatta G."/>
            <person name="di Bernardo D."/>
            <person name="Down T."/>
            <person name="Engstrom P."/>
            <person name="Fagiolini M."/>
            <person name="Faulkner G."/>
            <person name="Fletcher C.F."/>
            <person name="Fukushima T."/>
            <person name="Furuno M."/>
            <person name="Futaki S."/>
            <person name="Gariboldi M."/>
            <person name="Georgii-Hemming P."/>
            <person name="Gingeras T.R."/>
            <person name="Gojobori T."/>
            <person name="Green R.E."/>
            <person name="Gustincich S."/>
            <person name="Harbers M."/>
            <person name="Hayashi Y."/>
            <person name="Hensch T.K."/>
            <person name="Hirokawa N."/>
            <person name="Hill D."/>
            <person name="Huminiecki L."/>
            <person name="Iacono M."/>
            <person name="Ikeo K."/>
            <person name="Iwama A."/>
            <person name="Ishikawa T."/>
            <person name="Jakt M."/>
            <person name="Kanapin A."/>
            <person name="Katoh M."/>
            <person name="Kawasawa Y."/>
            <person name="Kelso J."/>
            <person name="Kitamura H."/>
            <person name="Kitano H."/>
            <person name="Kollias G."/>
            <person name="Krishnan S.P."/>
            <person name="Kruger A."/>
            <person name="Kummerfeld S.K."/>
            <person name="Kurochkin I.V."/>
            <person name="Lareau L.F."/>
            <person name="Lazarevic D."/>
            <person name="Lipovich L."/>
            <person name="Liu J."/>
            <person name="Liuni S."/>
            <person name="McWilliam S."/>
            <person name="Madan Babu M."/>
            <person name="Madera M."/>
            <person name="Marchionni L."/>
            <person name="Matsuda H."/>
            <person name="Matsuzawa S."/>
            <person name="Miki H."/>
            <person name="Mignone F."/>
            <person name="Miyake S."/>
            <person name="Morris K."/>
            <person name="Mottagui-Tabar S."/>
            <person name="Mulder N."/>
            <person name="Nakano N."/>
            <person name="Nakauchi H."/>
            <person name="Ng P."/>
            <person name="Nilsson R."/>
            <person name="Nishiguchi S."/>
            <person name="Nishikawa S."/>
            <person name="Nori F."/>
            <person name="Ohara O."/>
            <person name="Okazaki Y."/>
            <person name="Orlando V."/>
            <person name="Pang K.C."/>
            <person name="Pavan W.J."/>
            <person name="Pavesi G."/>
            <person name="Pesole G."/>
            <person name="Petrovsky N."/>
            <person name="Piazza S."/>
            <person name="Reed J."/>
            <person name="Reid J.F."/>
            <person name="Ring B.Z."/>
            <person name="Ringwald M."/>
            <person name="Rost B."/>
            <person name="Ruan Y."/>
            <person name="Salzberg S.L."/>
            <person name="Sandelin A."/>
            <person name="Schneider C."/>
            <person name="Schoenbach C."/>
            <person name="Sekiguchi K."/>
            <person name="Semple C.A."/>
            <person name="Seno S."/>
            <person name="Sessa L."/>
            <person name="Sheng Y."/>
            <person name="Shibata Y."/>
            <person name="Shimada H."/>
            <person name="Shimada K."/>
            <person name="Silva D."/>
            <person name="Sinclair B."/>
            <person name="Sperling S."/>
            <person name="Stupka E."/>
            <person name="Sugiura K."/>
            <person name="Sultana R."/>
            <person name="Takenaka Y."/>
            <person name="Taki K."/>
            <person name="Tammoja K."/>
            <person name="Tan S.L."/>
            <person name="Tang S."/>
            <person name="Taylor M.S."/>
            <person name="Tegner J."/>
            <person name="Teichmann S.A."/>
            <person name="Ueda H.R."/>
            <person name="van Nimwegen E."/>
            <person name="Verardo R."/>
            <person name="Wei C.L."/>
            <person name="Yagi K."/>
            <person name="Yamanishi H."/>
            <person name="Zabarovsky E."/>
            <person name="Zhu S."/>
            <person name="Zimmer A."/>
            <person name="Hide W."/>
            <person name="Bult C."/>
            <person name="Grimmond S.M."/>
            <person name="Teasdale R.D."/>
            <person name="Liu E.T."/>
            <person name="Brusic V."/>
            <person name="Quackenbush J."/>
            <person name="Wahlestedt C."/>
            <person name="Mattick J.S."/>
            <person name="Hume D.A."/>
            <person name="Kai C."/>
            <person name="Sasaki D."/>
            <person name="Tomaru Y."/>
            <person name="Fukuda S."/>
            <person name="Kanamori-Katayama M."/>
            <person name="Suzuki M."/>
            <person name="Aoki J."/>
            <person name="Arakawa T."/>
            <person name="Iida J."/>
            <person name="Imamura K."/>
            <person name="Itoh M."/>
            <person name="Kato T."/>
            <person name="Kawaji H."/>
            <person name="Kawagashira N."/>
            <person name="Kawashima T."/>
            <person name="Kojima M."/>
            <person name="Kondo S."/>
            <person name="Konno H."/>
            <person name="Nakano K."/>
            <person name="Ninomiya N."/>
            <person name="Nishio T."/>
            <person name="Okada M."/>
            <person name="Plessy C."/>
            <person name="Shibata K."/>
            <person name="Shiraki T."/>
            <person name="Suzuki S."/>
            <person name="Tagami M."/>
            <person name="Waki K."/>
            <person name="Watahiki A."/>
            <person name="Okamura-Oho Y."/>
            <person name="Suzuki H."/>
            <person name="Kawai J."/>
            <person name="Hayashizaki Y."/>
        </authorList>
    </citation>
    <scope>NUCLEOTIDE SEQUENCE [LARGE SCALE MRNA]</scope>
    <source>
        <strain>C57BL/6J</strain>
        <tissue>Bone marrow</tissue>
        <tissue>Embryo</tissue>
        <tissue>Head</tissue>
    </source>
</reference>
<reference key="3">
    <citation type="journal article" date="2009" name="PLoS Biol.">
        <title>Lineage-specific biology revealed by a finished genome assembly of the mouse.</title>
        <authorList>
            <person name="Church D.M."/>
            <person name="Goodstadt L."/>
            <person name="Hillier L.W."/>
            <person name="Zody M.C."/>
            <person name="Goldstein S."/>
            <person name="She X."/>
            <person name="Bult C.J."/>
            <person name="Agarwala R."/>
            <person name="Cherry J.L."/>
            <person name="DiCuccio M."/>
            <person name="Hlavina W."/>
            <person name="Kapustin Y."/>
            <person name="Meric P."/>
            <person name="Maglott D."/>
            <person name="Birtle Z."/>
            <person name="Marques A.C."/>
            <person name="Graves T."/>
            <person name="Zhou S."/>
            <person name="Teague B."/>
            <person name="Potamousis K."/>
            <person name="Churas C."/>
            <person name="Place M."/>
            <person name="Herschleb J."/>
            <person name="Runnheim R."/>
            <person name="Forrest D."/>
            <person name="Amos-Landgraf J."/>
            <person name="Schwartz D.C."/>
            <person name="Cheng Z."/>
            <person name="Lindblad-Toh K."/>
            <person name="Eichler E.E."/>
            <person name="Ponting C.P."/>
        </authorList>
    </citation>
    <scope>NUCLEOTIDE SEQUENCE [LARGE SCALE GENOMIC DNA]</scope>
    <source>
        <strain>C57BL/6J</strain>
    </source>
</reference>
<reference key="4">
    <citation type="journal article" date="2004" name="Genome Res.">
        <title>The status, quality, and expansion of the NIH full-length cDNA project: the Mammalian Gene Collection (MGC).</title>
        <authorList>
            <consortium name="The MGC Project Team"/>
        </authorList>
    </citation>
    <scope>NUCLEOTIDE SEQUENCE [LARGE SCALE MRNA]</scope>
    <source>
        <strain>FVB/N</strain>
        <tissue>Mammary gland</tissue>
    </source>
</reference>
<reference key="5">
    <citation type="journal article" date="2001" name="Proc. Natl. Acad. Sci. U.S.A.">
        <title>Identification of proteins that interact with mammalian peptide:N-glycanase and implicate this hydrolase in the proteasome-dependent pathway for protein degradation.</title>
        <authorList>
            <person name="Park H."/>
            <person name="Suzuki T."/>
            <person name="Lennarz W.J."/>
        </authorList>
    </citation>
    <scope>INTERACTION WITH NGLY1</scope>
</reference>
<reference key="6">
    <citation type="journal article" date="2002" name="Mol. Cell. Biol.">
        <title>Developmental defects and male sterility in mice lacking the ubiquitin-like DNA repair gene mHR23B.</title>
        <authorList>
            <person name="Ng J.M."/>
            <person name="Vrieling H."/>
            <person name="Sugasawa K."/>
            <person name="Ooms M.P."/>
            <person name="Grootegoed J.A."/>
            <person name="Vreeburg J.T."/>
            <person name="Visser P."/>
            <person name="Beems R.B."/>
            <person name="Gorgels T.G."/>
            <person name="Hanaoka F."/>
            <person name="Hoeijmakers J.H."/>
            <person name="van der Horst G.T."/>
        </authorList>
    </citation>
    <scope>DISRUPTION PHENOTYPE</scope>
</reference>
<reference key="7">
    <citation type="journal article" date="2003" name="Genes Dev.">
        <title>A novel regulation mechanism of DNA repair by damage-induced and RAD23-dependent stabilization of xeroderma pigmentosum group C protein.</title>
        <authorList>
            <person name="Ng J.M."/>
            <person name="Vermeulen W."/>
            <person name="van der Horst G.T."/>
            <person name="Bergink S."/>
            <person name="Sugasawa K."/>
            <person name="Vrieling H."/>
            <person name="Hoeijmakers J.H."/>
        </authorList>
    </citation>
    <scope>FUNCTION</scope>
    <scope>DISRUPTION PHENOTYPE</scope>
</reference>
<reference key="8">
    <citation type="journal article" date="2004" name="DNA Repair">
        <title>Relative levels of the two mammalian Rad23 homologs determine composition and stability of the xeroderma pigmentosum group C protein complex.</title>
        <authorList>
            <person name="Okuda Y."/>
            <person name="Nishi R."/>
            <person name="Ng J.M."/>
            <person name="Vermeulen W."/>
            <person name="van der Horst G.T."/>
            <person name="Mori T."/>
            <person name="Hoeijmakers J.H."/>
            <person name="Hanaoka F."/>
            <person name="Sugasawa K."/>
        </authorList>
    </citation>
    <scope>FUNCTION</scope>
    <scope>SUBCELLULAR LOCATION</scope>
    <scope>DISRUPTION PHENOTYPE</scope>
</reference>
<reference key="9">
    <citation type="journal article" date="2004" name="Proc. Natl. Acad. Sci. U.S.A.">
        <title>A complex between peptide:N-glycanase and two proteasome-linked proteins suggests a mechanism for the degradation of misfolded glycoproteins.</title>
        <authorList>
            <person name="Katiyar S."/>
            <person name="Li G."/>
            <person name="Lennarz W.J."/>
        </authorList>
    </citation>
    <scope>INTERACTION WITH NGLY1</scope>
</reference>
<reference key="10">
    <citation type="journal article" date="2005" name="Proc. Natl. Acad. Sci. U.S.A.">
        <title>Multiple modes of interaction of the deglycosylation enzyme, mouse peptide N-glycanase, with the proteasome.</title>
        <authorList>
            <person name="Li G."/>
            <person name="Zhou X."/>
            <person name="Zhao G."/>
            <person name="Schindelin H."/>
            <person name="Lennarz W.J."/>
        </authorList>
    </citation>
    <scope>INTERACTION WITH NGLY1</scope>
</reference>
<reference key="11">
    <citation type="journal article" date="2006" name="Proc. Natl. Acad. Sci. U.S.A.">
        <authorList>
            <person name="Li G."/>
            <person name="Zhou X."/>
            <person name="Zhao G."/>
            <person name="Schindelin H."/>
            <person name="Lennarz W.J."/>
        </authorList>
    </citation>
    <scope>ERRATUM OF PUBMED:16249333</scope>
</reference>
<reference key="12">
    <citation type="journal article" date="2006" name="Proc. Natl. Acad. Sci. U.S.A.">
        <title>The AAA ATPase p97 links peptide N-glycanase to the endoplasmic reticulum-associated E3 ligase autocrine motility factor receptor.</title>
        <authorList>
            <person name="Li G."/>
            <person name="Zhao G."/>
            <person name="Zhou X."/>
            <person name="Schindelin H."/>
            <person name="Lennarz W.J."/>
        </authorList>
    </citation>
    <scope>FUNCTION IN ERAD</scope>
    <scope>INTERACTION WITH AMFR; NGLY1 AND DEGLYCOSYLATED PROTEINS</scope>
</reference>
<reference key="13">
    <citation type="journal article" date="2010" name="Cell">
        <title>A tissue-specific atlas of mouse protein phosphorylation and expression.</title>
        <authorList>
            <person name="Huttlin E.L."/>
            <person name="Jedrychowski M.P."/>
            <person name="Elias J.E."/>
            <person name="Goswami T."/>
            <person name="Rad R."/>
            <person name="Beausoleil S.A."/>
            <person name="Villen J."/>
            <person name="Haas W."/>
            <person name="Sowa M.E."/>
            <person name="Gygi S.P."/>
        </authorList>
    </citation>
    <scope>IDENTIFICATION BY MASS SPECTROMETRY [LARGE SCALE ANALYSIS]</scope>
    <source>
        <tissue>Brain</tissue>
        <tissue>Brown adipose tissue</tissue>
        <tissue>Heart</tissue>
        <tissue>Kidney</tissue>
        <tissue>Liver</tissue>
        <tissue>Lung</tissue>
        <tissue>Pancreas</tissue>
        <tissue>Spleen</tissue>
        <tissue>Testis</tissue>
    </source>
</reference>
<reference key="14">
    <citation type="journal article" date="2006" name="J. Biol. Chem.">
        <title>Structure of the mouse peptide N-glycanase-HR23 complex suggests co-evolution of the endoplasmic reticulum-associated degradation and DNA repair pathways.</title>
        <authorList>
            <person name="Zhao G."/>
            <person name="Zhou X."/>
            <person name="Wang L."/>
            <person name="Li G."/>
            <person name="Kisker C."/>
            <person name="Lennarz W.J."/>
            <person name="Schindelin H."/>
        </authorList>
    </citation>
    <scope>X-RAY CRYSTALLOGRAPHY (2.8 ANGSTROMS) OF 273-332 IN COMPLEX WITH NGLY1</scope>
</reference>
<protein>
    <recommendedName>
        <fullName>UV excision repair protein RAD23 homolog B</fullName>
        <shortName>HR23B</shortName>
        <shortName>mHR23B</shortName>
    </recommendedName>
    <alternativeName>
        <fullName>XP-C repair-complementing complex 58 kDa protein</fullName>
        <shortName>p58</shortName>
    </alternativeName>
</protein>
<organism>
    <name type="scientific">Mus musculus</name>
    <name type="common">Mouse</name>
    <dbReference type="NCBI Taxonomy" id="10090"/>
    <lineage>
        <taxon>Eukaryota</taxon>
        <taxon>Metazoa</taxon>
        <taxon>Chordata</taxon>
        <taxon>Craniata</taxon>
        <taxon>Vertebrata</taxon>
        <taxon>Euteleostomi</taxon>
        <taxon>Mammalia</taxon>
        <taxon>Eutheria</taxon>
        <taxon>Euarchontoglires</taxon>
        <taxon>Glires</taxon>
        <taxon>Rodentia</taxon>
        <taxon>Myomorpha</taxon>
        <taxon>Muroidea</taxon>
        <taxon>Muridae</taxon>
        <taxon>Murinae</taxon>
        <taxon>Mus</taxon>
        <taxon>Mus</taxon>
    </lineage>
</organism>
<comment type="function">
    <text evidence="9 10 14">Multiubiquitin chain receptor involved in modulation of proteasomal degradation. Binds to polyubiquitin chains. Proposed to be capable to bind simultaneously to the 26S proteasome and to polyubiquitinated substrates and to deliver ubiquitinated proteins to the proteasome. May play a role in endoplasmic reticulum-associated degradation (ERAD) of misfolded glycoproteins by association with PNGase and delivering deglycosylated proteins to the proteasome.</text>
</comment>
<comment type="function">
    <text evidence="1">Involved in global genome nucleotide excision repair (GG-NER) by acting as component of the XPC complex. Cooperatively with Cetn2 appears to stabilize Xpc. May protect Xpc from proteasomal degradation (By similarity).</text>
</comment>
<comment type="function">
    <text evidence="1">The XPC complex is proposed to represent the first factor bound at the sites of DNA damage and together with other core recognition factors, Xpa, RPA and the TFIIH complex, is part of the pre-incision (or initial recognition) complex. The XPC complex recognizes a wide spectrum of damaged DNA characterized by distortions of the DNA helix such as single-stranded loops, mismatched bubbles or single-stranded overhangs. The orientation of XPC complex binding appears to be crucial for inducing a productive NER. XPC complex is proposed to recognize and to interact with unpaired bases on the undamaged DNA strand which is followed by recruitment of the TFIIH complex and subsequent scanning for lesions in the opposite strand in a 5'-to-3' direction by the NER machinery. Cyclobutane pyrimidine dimers (CPDs) which are formed upon UV-induced DNA damage esacpe detection by the XPC complex due to a low degree of structural perurbation. Instead they are detected by the UV-DDB complex which in turn recruits and cooperates with the XPC complex in the respective DNA repair. In vitro, the Xpc:Rad23b dimer is sufficient to initiate NER; it preferentially binds to cisplatin and UV-damaged double-stranded DNA and also binds to a variety of chemically and structurally diverse DNA adducts. Xpc:Rad23b contacts DNA both 5' and 3' of a cisplatin lesion with a preference for the 5' side. Xpc:Rad23bB induces a bend in DNA upon binding. Xpc:Rad23b stimulates the activity of DNA glycosylases Tdg and Smug1 (By similarity).</text>
</comment>
<comment type="subunit">
    <text evidence="1 7 11 12 13 14">Component of the XPC complex composed of XPC, RAD23B and CETN2. Interacts with NGLY1 and PSMC1. Interacts with ATXN3 (By similarity). Interacts with AMFR. Interacts with VCP; the interaction is indirect and mediated by NGLY1.</text>
</comment>
<comment type="subcellular location">
    <subcellularLocation>
        <location evidence="10">Nucleus</location>
    </subcellularLocation>
    <subcellularLocation>
        <location evidence="10">Cytoplasm</location>
    </subcellularLocation>
</comment>
<comment type="disruption phenotype">
    <text evidence="8 9 10">Impaired embryonic development with a 90 % rate of intrauterine or neonatal death. Surviving animals display a variety of abnormalities, including retarded growth, facial dysmorphology and male sterility. The effect on NER competence is reported conflictingly: According PubMed:11809813 no change in NER activity is found and according PubMed:15336624 a reduced NER activity is seen. Embryonic lethal with Rad23a and Rad23b double deficiency. Double deficient cells show reduced cell survival upopn UV radiation and reduced steady-state level of Xpc indicating a reduced NER capacity.</text>
</comment>
<comment type="similarity">
    <text evidence="15">Belongs to the RAD23 family.</text>
</comment>
<dbReference type="EMBL" id="X92411">
    <property type="protein sequence ID" value="CAA63146.1"/>
    <property type="molecule type" value="mRNA"/>
</dbReference>
<dbReference type="EMBL" id="AK150089">
    <property type="protein sequence ID" value="BAE29298.1"/>
    <property type="molecule type" value="mRNA"/>
</dbReference>
<dbReference type="EMBL" id="AK160880">
    <property type="protein sequence ID" value="BAE36067.1"/>
    <property type="molecule type" value="mRNA"/>
</dbReference>
<dbReference type="EMBL" id="AK160890">
    <property type="protein sequence ID" value="BAE36071.1"/>
    <property type="molecule type" value="mRNA"/>
</dbReference>
<dbReference type="EMBL" id="AK160973">
    <property type="protein sequence ID" value="BAE36124.1"/>
    <property type="molecule type" value="mRNA"/>
</dbReference>
<dbReference type="EMBL" id="AL683890">
    <property type="status" value="NOT_ANNOTATED_CDS"/>
    <property type="molecule type" value="Genomic_DNA"/>
</dbReference>
<dbReference type="EMBL" id="BC027747">
    <property type="protein sequence ID" value="AAH27747.1"/>
    <property type="molecule type" value="mRNA"/>
</dbReference>
<dbReference type="CCDS" id="CCDS18194.1"/>
<dbReference type="RefSeq" id="NP_033037.2">
    <property type="nucleotide sequence ID" value="NM_009011.4"/>
</dbReference>
<dbReference type="PDB" id="2F4M">
    <property type="method" value="X-ray"/>
    <property type="resolution" value="1.85 A"/>
    <property type="chains" value="B=273-332"/>
</dbReference>
<dbReference type="PDB" id="2F4O">
    <property type="method" value="X-ray"/>
    <property type="resolution" value="2.26 A"/>
    <property type="chains" value="B=273-332"/>
</dbReference>
<dbReference type="PDBsum" id="2F4M"/>
<dbReference type="PDBsum" id="2F4O"/>
<dbReference type="SMR" id="P54728"/>
<dbReference type="BioGRID" id="202562">
    <property type="interactions" value="33"/>
</dbReference>
<dbReference type="CORUM" id="P54728"/>
<dbReference type="FunCoup" id="P54728">
    <property type="interactions" value="4780"/>
</dbReference>
<dbReference type="IntAct" id="P54728">
    <property type="interactions" value="6"/>
</dbReference>
<dbReference type="STRING" id="10090.ENSMUSP00000030134"/>
<dbReference type="GlyGen" id="P54728">
    <property type="glycosylation" value="4 sites"/>
</dbReference>
<dbReference type="iPTMnet" id="P54728"/>
<dbReference type="PhosphoSitePlus" id="P54728"/>
<dbReference type="SwissPalm" id="P54728"/>
<dbReference type="CPTAC" id="non-CPTAC-3607"/>
<dbReference type="jPOST" id="P54728"/>
<dbReference type="PaxDb" id="10090-ENSMUSP00000030134"/>
<dbReference type="PeptideAtlas" id="P54728"/>
<dbReference type="ProteomicsDB" id="254908"/>
<dbReference type="Pumba" id="P54728"/>
<dbReference type="Antibodypedia" id="29324">
    <property type="antibodies" value="527 antibodies from 37 providers"/>
</dbReference>
<dbReference type="DNASU" id="19359"/>
<dbReference type="Ensembl" id="ENSMUST00000030134.9">
    <property type="protein sequence ID" value="ENSMUSP00000030134.9"/>
    <property type="gene ID" value="ENSMUSG00000028426.11"/>
</dbReference>
<dbReference type="GeneID" id="19359"/>
<dbReference type="KEGG" id="mmu:19359"/>
<dbReference type="UCSC" id="uc012dej.1">
    <property type="organism name" value="mouse"/>
</dbReference>
<dbReference type="AGR" id="MGI:105128"/>
<dbReference type="CTD" id="5887"/>
<dbReference type="MGI" id="MGI:105128">
    <property type="gene designation" value="Rad23b"/>
</dbReference>
<dbReference type="VEuPathDB" id="HostDB:ENSMUSG00000028426"/>
<dbReference type="eggNOG" id="KOG0011">
    <property type="taxonomic scope" value="Eukaryota"/>
</dbReference>
<dbReference type="GeneTree" id="ENSGT00390000012078"/>
<dbReference type="HOGENOM" id="CLU_040364_0_1_1"/>
<dbReference type="InParanoid" id="P54728"/>
<dbReference type="OMA" id="PHMLEPI"/>
<dbReference type="OrthoDB" id="419317at2759"/>
<dbReference type="PhylomeDB" id="P54728"/>
<dbReference type="TreeFam" id="TF101216"/>
<dbReference type="Reactome" id="R-MMU-532668">
    <property type="pathway name" value="N-glycan trimming in the ER and Calnexin/Calreticulin cycle"/>
</dbReference>
<dbReference type="Reactome" id="R-MMU-5689877">
    <property type="pathway name" value="Josephin domain DUBs"/>
</dbReference>
<dbReference type="Reactome" id="R-MMU-5696394">
    <property type="pathway name" value="DNA Damage Recognition in GG-NER"/>
</dbReference>
<dbReference type="Reactome" id="R-MMU-5696395">
    <property type="pathway name" value="Formation of Incision Complex in GG-NER"/>
</dbReference>
<dbReference type="BioGRID-ORCS" id="19359">
    <property type="hits" value="12 hits in 114 CRISPR screens"/>
</dbReference>
<dbReference type="ChiTaRS" id="Rad23b">
    <property type="organism name" value="mouse"/>
</dbReference>
<dbReference type="EvolutionaryTrace" id="P54728"/>
<dbReference type="PRO" id="PR:P54728"/>
<dbReference type="Proteomes" id="UP000000589">
    <property type="component" value="Chromosome 4"/>
</dbReference>
<dbReference type="RNAct" id="P54728">
    <property type="molecule type" value="protein"/>
</dbReference>
<dbReference type="Bgee" id="ENSMUSG00000028426">
    <property type="expression patterns" value="Expressed in undifferentiated genital tubercle and 271 other cell types or tissues"/>
</dbReference>
<dbReference type="GO" id="GO:0005737">
    <property type="term" value="C:cytoplasm"/>
    <property type="evidence" value="ECO:0000314"/>
    <property type="project" value="MGI"/>
</dbReference>
<dbReference type="GO" id="GO:0005829">
    <property type="term" value="C:cytosol"/>
    <property type="evidence" value="ECO:0007669"/>
    <property type="project" value="Ensembl"/>
</dbReference>
<dbReference type="GO" id="GO:0005654">
    <property type="term" value="C:nucleoplasm"/>
    <property type="evidence" value="ECO:0007669"/>
    <property type="project" value="Ensembl"/>
</dbReference>
<dbReference type="GO" id="GO:0005634">
    <property type="term" value="C:nucleus"/>
    <property type="evidence" value="ECO:0000314"/>
    <property type="project" value="MGI"/>
</dbReference>
<dbReference type="GO" id="GO:0000502">
    <property type="term" value="C:proteasome complex"/>
    <property type="evidence" value="ECO:0007669"/>
    <property type="project" value="UniProtKB-KW"/>
</dbReference>
<dbReference type="GO" id="GO:0071942">
    <property type="term" value="C:XPC complex"/>
    <property type="evidence" value="ECO:0000250"/>
    <property type="project" value="UniProtKB"/>
</dbReference>
<dbReference type="GO" id="GO:0003684">
    <property type="term" value="F:damaged DNA binding"/>
    <property type="evidence" value="ECO:0007669"/>
    <property type="project" value="InterPro"/>
</dbReference>
<dbReference type="GO" id="GO:0140612">
    <property type="term" value="F:DNA damage sensor activity"/>
    <property type="evidence" value="ECO:0007669"/>
    <property type="project" value="Ensembl"/>
</dbReference>
<dbReference type="GO" id="GO:0031593">
    <property type="term" value="F:polyubiquitin modification-dependent protein binding"/>
    <property type="evidence" value="ECO:0007669"/>
    <property type="project" value="Ensembl"/>
</dbReference>
<dbReference type="GO" id="GO:0000978">
    <property type="term" value="F:RNA polymerase II cis-regulatory region sequence-specific DNA binding"/>
    <property type="evidence" value="ECO:0000314"/>
    <property type="project" value="MGI"/>
</dbReference>
<dbReference type="GO" id="GO:0061629">
    <property type="term" value="F:RNA polymerase II-specific DNA-binding transcription factor binding"/>
    <property type="evidence" value="ECO:0000353"/>
    <property type="project" value="MGI"/>
</dbReference>
<dbReference type="GO" id="GO:0000976">
    <property type="term" value="F:transcription cis-regulatory region binding"/>
    <property type="evidence" value="ECO:0000314"/>
    <property type="project" value="MGI"/>
</dbReference>
<dbReference type="GO" id="GO:0098761">
    <property type="term" value="P:cellular response to interleukin-7"/>
    <property type="evidence" value="ECO:0000314"/>
    <property type="project" value="MGI"/>
</dbReference>
<dbReference type="GO" id="GO:0006974">
    <property type="term" value="P:DNA damage response"/>
    <property type="evidence" value="ECO:0000314"/>
    <property type="project" value="MGI"/>
</dbReference>
<dbReference type="GO" id="GO:0048568">
    <property type="term" value="P:embryonic organ development"/>
    <property type="evidence" value="ECO:0007669"/>
    <property type="project" value="Ensembl"/>
</dbReference>
<dbReference type="GO" id="GO:0006289">
    <property type="term" value="P:nucleotide-excision repair"/>
    <property type="evidence" value="ECO:0007669"/>
    <property type="project" value="Ensembl"/>
</dbReference>
<dbReference type="GO" id="GO:0043161">
    <property type="term" value="P:proteasome-mediated ubiquitin-dependent protein catabolic process"/>
    <property type="evidence" value="ECO:0007669"/>
    <property type="project" value="InterPro"/>
</dbReference>
<dbReference type="GO" id="GO:0032434">
    <property type="term" value="P:regulation of proteasomal ubiquitin-dependent protein catabolic process"/>
    <property type="evidence" value="ECO:0007669"/>
    <property type="project" value="Ensembl"/>
</dbReference>
<dbReference type="GO" id="GO:0007283">
    <property type="term" value="P:spermatogenesis"/>
    <property type="evidence" value="ECO:0000315"/>
    <property type="project" value="MGI"/>
</dbReference>
<dbReference type="CDD" id="cd14377">
    <property type="entry name" value="UBA1_Rad23"/>
    <property type="match status" value="1"/>
</dbReference>
<dbReference type="CDD" id="cd14428">
    <property type="entry name" value="UBA2_HR23B"/>
    <property type="match status" value="1"/>
</dbReference>
<dbReference type="CDD" id="cd16126">
    <property type="entry name" value="Ubl_HR23B"/>
    <property type="match status" value="1"/>
</dbReference>
<dbReference type="FunFam" id="1.10.10.540:FF:000001">
    <property type="entry name" value="UV excision repair protein RAD23 B"/>
    <property type="match status" value="1"/>
</dbReference>
<dbReference type="FunFam" id="1.10.8.10:FF:000002">
    <property type="entry name" value="UV excision repair protein RAD23 homolog"/>
    <property type="match status" value="1"/>
</dbReference>
<dbReference type="FunFam" id="1.10.8.10:FF:000003">
    <property type="entry name" value="UV excision repair protein RAD23 homolog"/>
    <property type="match status" value="1"/>
</dbReference>
<dbReference type="FunFam" id="3.10.20.90:FF:000053">
    <property type="entry name" value="UV excision repair protein RAD23 homolog A"/>
    <property type="match status" value="1"/>
</dbReference>
<dbReference type="Gene3D" id="1.10.8.10">
    <property type="entry name" value="DNA helicase RuvA subunit, C-terminal domain"/>
    <property type="match status" value="2"/>
</dbReference>
<dbReference type="Gene3D" id="3.10.20.90">
    <property type="entry name" value="Phosphatidylinositol 3-kinase Catalytic Subunit, Chain A, domain 1"/>
    <property type="match status" value="1"/>
</dbReference>
<dbReference type="Gene3D" id="1.10.10.540">
    <property type="entry name" value="XPC-binding domain"/>
    <property type="match status" value="1"/>
</dbReference>
<dbReference type="InterPro" id="IPR004806">
    <property type="entry name" value="Rad23"/>
</dbReference>
<dbReference type="InterPro" id="IPR041811">
    <property type="entry name" value="RAD23A/B_UBA1"/>
</dbReference>
<dbReference type="InterPro" id="IPR006636">
    <property type="entry name" value="STI1_HS-bd"/>
</dbReference>
<dbReference type="InterPro" id="IPR015940">
    <property type="entry name" value="UBA"/>
</dbReference>
<dbReference type="InterPro" id="IPR009060">
    <property type="entry name" value="UBA-like_sf"/>
</dbReference>
<dbReference type="InterPro" id="IPR000626">
    <property type="entry name" value="Ubiquitin-like_dom"/>
</dbReference>
<dbReference type="InterPro" id="IPR029071">
    <property type="entry name" value="Ubiquitin-like_domsf"/>
</dbReference>
<dbReference type="InterPro" id="IPR015360">
    <property type="entry name" value="XPC-bd"/>
</dbReference>
<dbReference type="InterPro" id="IPR036353">
    <property type="entry name" value="XPC-bd_sf"/>
</dbReference>
<dbReference type="NCBIfam" id="TIGR00601">
    <property type="entry name" value="rad23"/>
    <property type="match status" value="1"/>
</dbReference>
<dbReference type="PANTHER" id="PTHR10621">
    <property type="entry name" value="UV EXCISION REPAIR PROTEIN RAD23"/>
    <property type="match status" value="1"/>
</dbReference>
<dbReference type="PANTHER" id="PTHR10621:SF13">
    <property type="entry name" value="UV EXCISION REPAIR PROTEIN RAD23 HOMOLOG B"/>
    <property type="match status" value="1"/>
</dbReference>
<dbReference type="Pfam" id="PF00627">
    <property type="entry name" value="UBA"/>
    <property type="match status" value="2"/>
</dbReference>
<dbReference type="Pfam" id="PF00240">
    <property type="entry name" value="ubiquitin"/>
    <property type="match status" value="1"/>
</dbReference>
<dbReference type="Pfam" id="PF09280">
    <property type="entry name" value="XPC-binding"/>
    <property type="match status" value="1"/>
</dbReference>
<dbReference type="PRINTS" id="PR01839">
    <property type="entry name" value="RAD23PROTEIN"/>
</dbReference>
<dbReference type="SMART" id="SM00727">
    <property type="entry name" value="STI1"/>
    <property type="match status" value="1"/>
</dbReference>
<dbReference type="SMART" id="SM00165">
    <property type="entry name" value="UBA"/>
    <property type="match status" value="2"/>
</dbReference>
<dbReference type="SMART" id="SM00213">
    <property type="entry name" value="UBQ"/>
    <property type="match status" value="1"/>
</dbReference>
<dbReference type="SUPFAM" id="SSF46934">
    <property type="entry name" value="UBA-like"/>
    <property type="match status" value="2"/>
</dbReference>
<dbReference type="SUPFAM" id="SSF54236">
    <property type="entry name" value="Ubiquitin-like"/>
    <property type="match status" value="1"/>
</dbReference>
<dbReference type="SUPFAM" id="SSF101238">
    <property type="entry name" value="XPC-binding domain"/>
    <property type="match status" value="1"/>
</dbReference>
<dbReference type="PROSITE" id="PS50030">
    <property type="entry name" value="UBA"/>
    <property type="match status" value="2"/>
</dbReference>
<dbReference type="PROSITE" id="PS50053">
    <property type="entry name" value="UBIQUITIN_2"/>
    <property type="match status" value="1"/>
</dbReference>
<sequence length="416" mass="43513">MQVTLKTLQQQTFKIDIDPEETVKALKEKIESEKGKDAFPVAGQKLIYAGKILSDDTALKEYKIDEKNFVVVMVTKPKAVTTAVPATTQPSSTPSPTAVSSSPAVAAAQAPAPTPALPPTSTPASTAPASTTASSEPAPAGATQPEKPAEKPAQTPVLTSPAPADSTPGDSSRSNLFEDATSALVTGQSYENMVTEIMSMGYEREQVIAALRASFNNPDRAVEYLLMGIPGDRESQAVVDPPPQAVSTGTPQSPAVAAAAATTTATTTTTSGGHPLEFLRNQPQFQQMRQIIQQNPSLLPALLQQIGRENPQLLQQISQHQEHFIQMLNEPVQEAGSQGGGGGGGGGGGGGGGGGIAEAGSGHMNYIQVTPQEKEAIERLKALGFPEGLVIQAYFACEKNENLAANFLLQQNFDED</sequence>
<name>RD23B_MOUSE</name>
<evidence type="ECO:0000250" key="1"/>
<evidence type="ECO:0000250" key="2">
    <source>
        <dbReference type="UniProtKB" id="P54727"/>
    </source>
</evidence>
<evidence type="ECO:0000250" key="3">
    <source>
        <dbReference type="UniProtKB" id="Q4KMA2"/>
    </source>
</evidence>
<evidence type="ECO:0000255" key="4">
    <source>
        <dbReference type="PROSITE-ProRule" id="PRU00212"/>
    </source>
</evidence>
<evidence type="ECO:0000255" key="5">
    <source>
        <dbReference type="PROSITE-ProRule" id="PRU00214"/>
    </source>
</evidence>
<evidence type="ECO:0000256" key="6">
    <source>
        <dbReference type="SAM" id="MobiDB-lite"/>
    </source>
</evidence>
<evidence type="ECO:0000269" key="7">
    <source>
    </source>
</evidence>
<evidence type="ECO:0000269" key="8">
    <source>
    </source>
</evidence>
<evidence type="ECO:0000269" key="9">
    <source>
    </source>
</evidence>
<evidence type="ECO:0000269" key="10">
    <source>
    </source>
</evidence>
<evidence type="ECO:0000269" key="11">
    <source>
    </source>
</evidence>
<evidence type="ECO:0000269" key="12">
    <source>
    </source>
</evidence>
<evidence type="ECO:0000269" key="13">
    <source>
    </source>
</evidence>
<evidence type="ECO:0000269" key="14">
    <source>
    </source>
</evidence>
<evidence type="ECO:0000305" key="15"/>
<evidence type="ECO:0007829" key="16">
    <source>
        <dbReference type="PDB" id="2F4M"/>
    </source>
</evidence>
<proteinExistence type="evidence at protein level"/>
<accession>P54728</accession>
<accession>Q3TUA4</accession>